<comment type="function">
    <text evidence="1">RNA chaperone that binds small regulatory RNA (sRNAs) and mRNAs to facilitate mRNA translational regulation in response to envelope stress, environmental stress and changes in metabolite concentrations. Also binds with high specificity to tRNAs.</text>
</comment>
<comment type="subunit">
    <text evidence="1">Homohexamer.</text>
</comment>
<comment type="similarity">
    <text evidence="1">Belongs to the Hfq family.</text>
</comment>
<gene>
    <name evidence="1" type="primary">hfq</name>
    <name type="ordered locus">RPD_2594</name>
</gene>
<feature type="chain" id="PRO_1000080682" description="RNA-binding protein Hfq">
    <location>
        <begin position="1"/>
        <end position="82"/>
    </location>
</feature>
<feature type="domain" description="Sm" evidence="2">
    <location>
        <begin position="11"/>
        <end position="71"/>
    </location>
</feature>
<sequence length="82" mass="9151">MAADRAQNLQDTFLNHVRKTKTPLTIFLVNGVKLQGIVTWFDNFCLLLRRDGHSQLVYKHAISTIMPGAPIQLFEGGEDAPA</sequence>
<name>HFQ_RHOPS</name>
<dbReference type="EMBL" id="CP000283">
    <property type="protein sequence ID" value="ABE39823.1"/>
    <property type="molecule type" value="Genomic_DNA"/>
</dbReference>
<dbReference type="SMR" id="Q137B6"/>
<dbReference type="STRING" id="316057.RPD_2594"/>
<dbReference type="KEGG" id="rpd:RPD_2594"/>
<dbReference type="eggNOG" id="COG1923">
    <property type="taxonomic scope" value="Bacteria"/>
</dbReference>
<dbReference type="HOGENOM" id="CLU_113688_0_0_5"/>
<dbReference type="BioCyc" id="RPAL316057:RPD_RS13045-MONOMER"/>
<dbReference type="Proteomes" id="UP000001818">
    <property type="component" value="Chromosome"/>
</dbReference>
<dbReference type="GO" id="GO:0005829">
    <property type="term" value="C:cytosol"/>
    <property type="evidence" value="ECO:0007669"/>
    <property type="project" value="TreeGrafter"/>
</dbReference>
<dbReference type="GO" id="GO:0003723">
    <property type="term" value="F:RNA binding"/>
    <property type="evidence" value="ECO:0007669"/>
    <property type="project" value="UniProtKB-UniRule"/>
</dbReference>
<dbReference type="GO" id="GO:0006355">
    <property type="term" value="P:regulation of DNA-templated transcription"/>
    <property type="evidence" value="ECO:0007669"/>
    <property type="project" value="InterPro"/>
</dbReference>
<dbReference type="GO" id="GO:0043487">
    <property type="term" value="P:regulation of RNA stability"/>
    <property type="evidence" value="ECO:0007669"/>
    <property type="project" value="TreeGrafter"/>
</dbReference>
<dbReference type="GO" id="GO:0045974">
    <property type="term" value="P:regulation of translation, ncRNA-mediated"/>
    <property type="evidence" value="ECO:0007669"/>
    <property type="project" value="TreeGrafter"/>
</dbReference>
<dbReference type="CDD" id="cd01716">
    <property type="entry name" value="Hfq"/>
    <property type="match status" value="1"/>
</dbReference>
<dbReference type="FunFam" id="2.30.30.100:FF:000001">
    <property type="entry name" value="RNA-binding protein Hfq"/>
    <property type="match status" value="1"/>
</dbReference>
<dbReference type="Gene3D" id="2.30.30.100">
    <property type="match status" value="1"/>
</dbReference>
<dbReference type="HAMAP" id="MF_00436">
    <property type="entry name" value="Hfq"/>
    <property type="match status" value="1"/>
</dbReference>
<dbReference type="InterPro" id="IPR005001">
    <property type="entry name" value="Hfq"/>
</dbReference>
<dbReference type="InterPro" id="IPR010920">
    <property type="entry name" value="LSM_dom_sf"/>
</dbReference>
<dbReference type="InterPro" id="IPR047575">
    <property type="entry name" value="Sm"/>
</dbReference>
<dbReference type="NCBIfam" id="TIGR02383">
    <property type="entry name" value="Hfq"/>
    <property type="match status" value="1"/>
</dbReference>
<dbReference type="NCBIfam" id="NF001602">
    <property type="entry name" value="PRK00395.1"/>
    <property type="match status" value="1"/>
</dbReference>
<dbReference type="PANTHER" id="PTHR34772">
    <property type="entry name" value="RNA-BINDING PROTEIN HFQ"/>
    <property type="match status" value="1"/>
</dbReference>
<dbReference type="PANTHER" id="PTHR34772:SF1">
    <property type="entry name" value="RNA-BINDING PROTEIN HFQ"/>
    <property type="match status" value="1"/>
</dbReference>
<dbReference type="Pfam" id="PF17209">
    <property type="entry name" value="Hfq"/>
    <property type="match status" value="1"/>
</dbReference>
<dbReference type="SUPFAM" id="SSF50182">
    <property type="entry name" value="Sm-like ribonucleoproteins"/>
    <property type="match status" value="1"/>
</dbReference>
<dbReference type="PROSITE" id="PS52002">
    <property type="entry name" value="SM"/>
    <property type="match status" value="1"/>
</dbReference>
<protein>
    <recommendedName>
        <fullName evidence="1">RNA-binding protein Hfq</fullName>
    </recommendedName>
</protein>
<organism>
    <name type="scientific">Rhodopseudomonas palustris (strain BisB5)</name>
    <dbReference type="NCBI Taxonomy" id="316057"/>
    <lineage>
        <taxon>Bacteria</taxon>
        <taxon>Pseudomonadati</taxon>
        <taxon>Pseudomonadota</taxon>
        <taxon>Alphaproteobacteria</taxon>
        <taxon>Hyphomicrobiales</taxon>
        <taxon>Nitrobacteraceae</taxon>
        <taxon>Rhodopseudomonas</taxon>
    </lineage>
</organism>
<reference key="1">
    <citation type="submission" date="2006-03" db="EMBL/GenBank/DDBJ databases">
        <title>Complete sequence of Rhodopseudomonas palustris BisB5.</title>
        <authorList>
            <consortium name="US DOE Joint Genome Institute"/>
            <person name="Copeland A."/>
            <person name="Lucas S."/>
            <person name="Lapidus A."/>
            <person name="Barry K."/>
            <person name="Detter J.C."/>
            <person name="Glavina del Rio T."/>
            <person name="Hammon N."/>
            <person name="Israni S."/>
            <person name="Dalin E."/>
            <person name="Tice H."/>
            <person name="Pitluck S."/>
            <person name="Chain P."/>
            <person name="Malfatti S."/>
            <person name="Shin M."/>
            <person name="Vergez L."/>
            <person name="Schmutz J."/>
            <person name="Larimer F."/>
            <person name="Land M."/>
            <person name="Hauser L."/>
            <person name="Pelletier D.A."/>
            <person name="Kyrpides N."/>
            <person name="Lykidis A."/>
            <person name="Oda Y."/>
            <person name="Harwood C.S."/>
            <person name="Richardson P."/>
        </authorList>
    </citation>
    <scope>NUCLEOTIDE SEQUENCE [LARGE SCALE GENOMIC DNA]</scope>
    <source>
        <strain>BisB5</strain>
    </source>
</reference>
<keyword id="KW-0694">RNA-binding</keyword>
<keyword id="KW-0346">Stress response</keyword>
<accession>Q137B6</accession>
<proteinExistence type="inferred from homology"/>
<evidence type="ECO:0000255" key="1">
    <source>
        <dbReference type="HAMAP-Rule" id="MF_00436"/>
    </source>
</evidence>
<evidence type="ECO:0000255" key="2">
    <source>
        <dbReference type="PROSITE-ProRule" id="PRU01346"/>
    </source>
</evidence>